<dbReference type="EC" id="3.6.4.13" evidence="1"/>
<dbReference type="EMBL" id="AB169466">
    <property type="protein sequence ID" value="BAE01548.1"/>
    <property type="molecule type" value="mRNA"/>
</dbReference>
<dbReference type="RefSeq" id="NP_001270270.1">
    <property type="nucleotide sequence ID" value="NM_001283341.1"/>
</dbReference>
<dbReference type="SMR" id="Q4R5S7"/>
<dbReference type="STRING" id="9541.ENSMFAP00000042985"/>
<dbReference type="eggNOG" id="KOG0335">
    <property type="taxonomic scope" value="Eukaryota"/>
</dbReference>
<dbReference type="Proteomes" id="UP000233100">
    <property type="component" value="Unplaced"/>
</dbReference>
<dbReference type="GO" id="GO:0005737">
    <property type="term" value="C:cytoplasm"/>
    <property type="evidence" value="ECO:0000250"/>
    <property type="project" value="UniProtKB"/>
</dbReference>
<dbReference type="GO" id="GO:0048471">
    <property type="term" value="C:perinuclear region of cytoplasm"/>
    <property type="evidence" value="ECO:0007669"/>
    <property type="project" value="UniProtKB-SubCell"/>
</dbReference>
<dbReference type="GO" id="GO:0071546">
    <property type="term" value="C:pi-body"/>
    <property type="evidence" value="ECO:0000250"/>
    <property type="project" value="UniProtKB"/>
</dbReference>
<dbReference type="GO" id="GO:0071547">
    <property type="term" value="C:piP-body"/>
    <property type="evidence" value="ECO:0000250"/>
    <property type="project" value="UniProtKB"/>
</dbReference>
<dbReference type="GO" id="GO:0005524">
    <property type="term" value="F:ATP binding"/>
    <property type="evidence" value="ECO:0007669"/>
    <property type="project" value="UniProtKB-KW"/>
</dbReference>
<dbReference type="GO" id="GO:0016887">
    <property type="term" value="F:ATP hydrolysis activity"/>
    <property type="evidence" value="ECO:0000250"/>
    <property type="project" value="UniProtKB"/>
</dbReference>
<dbReference type="GO" id="GO:0003676">
    <property type="term" value="F:nucleic acid binding"/>
    <property type="evidence" value="ECO:0007669"/>
    <property type="project" value="InterPro"/>
</dbReference>
<dbReference type="GO" id="GO:0003724">
    <property type="term" value="F:RNA helicase activity"/>
    <property type="evidence" value="ECO:0007669"/>
    <property type="project" value="UniProtKB-EC"/>
</dbReference>
<dbReference type="GO" id="GO:0030154">
    <property type="term" value="P:cell differentiation"/>
    <property type="evidence" value="ECO:0007669"/>
    <property type="project" value="UniProtKB-KW"/>
</dbReference>
<dbReference type="GO" id="GO:0007141">
    <property type="term" value="P:male meiosis I"/>
    <property type="evidence" value="ECO:0000250"/>
    <property type="project" value="UniProtKB"/>
</dbReference>
<dbReference type="GO" id="GO:0007140">
    <property type="term" value="P:male meiotic nuclear division"/>
    <property type="evidence" value="ECO:0000250"/>
    <property type="project" value="UniProtKB"/>
</dbReference>
<dbReference type="GO" id="GO:0034587">
    <property type="term" value="P:piRNA processing"/>
    <property type="evidence" value="ECO:0000250"/>
    <property type="project" value="UniProtKB"/>
</dbReference>
<dbReference type="GO" id="GO:0007283">
    <property type="term" value="P:spermatogenesis"/>
    <property type="evidence" value="ECO:0000250"/>
    <property type="project" value="UniProtKB"/>
</dbReference>
<dbReference type="GO" id="GO:0141196">
    <property type="term" value="P:transposable element silencing by piRNA-mediated DNA methylation"/>
    <property type="evidence" value="ECO:0000250"/>
    <property type="project" value="UniProtKB"/>
</dbReference>
<dbReference type="GO" id="GO:0141006">
    <property type="term" value="P:transposable element silencing by piRNA-mediated heterochromatin formation"/>
    <property type="evidence" value="ECO:0000250"/>
    <property type="project" value="UniProtKB"/>
</dbReference>
<dbReference type="CDD" id="cd18052">
    <property type="entry name" value="DEADc_DDX4"/>
    <property type="match status" value="1"/>
</dbReference>
<dbReference type="CDD" id="cd18787">
    <property type="entry name" value="SF2_C_DEAD"/>
    <property type="match status" value="1"/>
</dbReference>
<dbReference type="FunFam" id="3.40.50.300:FF:000008">
    <property type="entry name" value="ATP-dependent RNA helicase RhlB"/>
    <property type="match status" value="1"/>
</dbReference>
<dbReference type="FunFam" id="3.40.50.300:FF:000397">
    <property type="entry name" value="Probable ATP-dependent RNA helicase DDX4"/>
    <property type="match status" value="1"/>
</dbReference>
<dbReference type="Gene3D" id="3.40.50.300">
    <property type="entry name" value="P-loop containing nucleotide triphosphate hydrolases"/>
    <property type="match status" value="2"/>
</dbReference>
<dbReference type="InterPro" id="IPR011545">
    <property type="entry name" value="DEAD/DEAH_box_helicase_dom"/>
</dbReference>
<dbReference type="InterPro" id="IPR014001">
    <property type="entry name" value="Helicase_ATP-bd"/>
</dbReference>
<dbReference type="InterPro" id="IPR001650">
    <property type="entry name" value="Helicase_C-like"/>
</dbReference>
<dbReference type="InterPro" id="IPR027417">
    <property type="entry name" value="P-loop_NTPase"/>
</dbReference>
<dbReference type="InterPro" id="IPR000629">
    <property type="entry name" value="RNA-helicase_DEAD-box_CS"/>
</dbReference>
<dbReference type="InterPro" id="IPR014014">
    <property type="entry name" value="RNA_helicase_DEAD_Q_motif"/>
</dbReference>
<dbReference type="PANTHER" id="PTHR47958">
    <property type="entry name" value="ATP-DEPENDENT RNA HELICASE DBP3"/>
    <property type="match status" value="1"/>
</dbReference>
<dbReference type="Pfam" id="PF00270">
    <property type="entry name" value="DEAD"/>
    <property type="match status" value="1"/>
</dbReference>
<dbReference type="Pfam" id="PF00271">
    <property type="entry name" value="Helicase_C"/>
    <property type="match status" value="1"/>
</dbReference>
<dbReference type="SMART" id="SM00487">
    <property type="entry name" value="DEXDc"/>
    <property type="match status" value="1"/>
</dbReference>
<dbReference type="SMART" id="SM00490">
    <property type="entry name" value="HELICc"/>
    <property type="match status" value="1"/>
</dbReference>
<dbReference type="SUPFAM" id="SSF52540">
    <property type="entry name" value="P-loop containing nucleoside triphosphate hydrolases"/>
    <property type="match status" value="2"/>
</dbReference>
<dbReference type="PROSITE" id="PS00039">
    <property type="entry name" value="DEAD_ATP_HELICASE"/>
    <property type="match status" value="1"/>
</dbReference>
<dbReference type="PROSITE" id="PS51192">
    <property type="entry name" value="HELICASE_ATP_BIND_1"/>
    <property type="match status" value="1"/>
</dbReference>
<dbReference type="PROSITE" id="PS51194">
    <property type="entry name" value="HELICASE_CTER"/>
    <property type="match status" value="1"/>
</dbReference>
<dbReference type="PROSITE" id="PS51195">
    <property type="entry name" value="Q_MOTIF"/>
    <property type="match status" value="1"/>
</dbReference>
<proteinExistence type="evidence at transcript level"/>
<gene>
    <name type="primary">DDX4</name>
    <name type="ORF">QtsA-21246</name>
</gene>
<name>DDX4_MACFA</name>
<comment type="function">
    <text evidence="1">ATP-dependent RNA helicase required during spermatogenesis to repress transposable elements and preventing their mobilization, which is essential for the germline integrity. Acts via the piRNA metabolic process, which mediates the repression of transposable elements during meiosis by forming complexes composed of piRNAs and Piwi proteins and governs the methylation and subsequent repression of transposons. Involved in the secondary piRNAs metabolic process, the production of piRNAs in fetal male germ cells through a ping-pong amplification cycle. Required for PIWIL2 slicing-triggered piRNA biogenesis: helicase activity enables utilization of one of the slice cleavage fragments generated by PIWIL2 and processing these pre-piRNAs into piRNAs.</text>
</comment>
<comment type="catalytic activity">
    <reaction evidence="1">
        <text>ATP + H2O = ADP + phosphate + H(+)</text>
        <dbReference type="Rhea" id="RHEA:13065"/>
        <dbReference type="ChEBI" id="CHEBI:15377"/>
        <dbReference type="ChEBI" id="CHEBI:15378"/>
        <dbReference type="ChEBI" id="CHEBI:30616"/>
        <dbReference type="ChEBI" id="CHEBI:43474"/>
        <dbReference type="ChEBI" id="CHEBI:456216"/>
        <dbReference type="EC" id="3.6.4.13"/>
    </reaction>
</comment>
<comment type="subunit">
    <text evidence="1">Found in a mRNP complex, at least composed of TDRD1, TDRD6, TDRD7 and DDX4. Interacts with RANBP9. Interacts with RANBP10. Interacts with PIWIL2 and MAEL. Interacts with BMAL1 and CLOCK. Interacts with Tex19.1 and, probably, Tex19.2. Interacts with RBM46.</text>
</comment>
<comment type="subcellular location">
    <subcellularLocation>
        <location evidence="1">Cytoplasm</location>
    </subcellularLocation>
    <subcellularLocation>
        <location evidence="1">Cytoplasm</location>
        <location evidence="1">Perinuclear region</location>
    </subcellularLocation>
    <text evidence="1">Component of the meiotic nuage, also named P granule, a germ-cell-specific organelle required to repress transposon activity during meiosis.</text>
</comment>
<comment type="similarity">
    <text evidence="7">Belongs to the DEAD box helicase family. DDX4/VASA subfamily.</text>
</comment>
<reference key="1">
    <citation type="submission" date="2005-06" db="EMBL/GenBank/DDBJ databases">
        <title>DNA sequences of macaque genes expressed in brain or testis and its evolutionary implications.</title>
        <authorList>
            <consortium name="International consortium for macaque cDNA sequencing and analysis"/>
        </authorList>
    </citation>
    <scope>NUCLEOTIDE SEQUENCE [LARGE SCALE MRNA]</scope>
    <source>
        <tissue>Testis</tissue>
    </source>
</reference>
<accession>Q4R5S7</accession>
<feature type="chain" id="PRO_0000054978" description="Probable ATP-dependent RNA helicase DDX4">
    <location>
        <begin position="1"/>
        <end position="725"/>
    </location>
</feature>
<feature type="domain" description="Helicase ATP-binding" evidence="4">
    <location>
        <begin position="320"/>
        <end position="503"/>
    </location>
</feature>
<feature type="domain" description="Helicase C-terminal" evidence="5">
    <location>
        <begin position="531"/>
        <end position="676"/>
    </location>
</feature>
<feature type="region of interest" description="Disordered" evidence="6">
    <location>
        <begin position="1"/>
        <end position="251"/>
    </location>
</feature>
<feature type="region of interest" description="Interaction with RANBP9" evidence="3">
    <location>
        <begin position="229"/>
        <end position="248"/>
    </location>
</feature>
<feature type="region of interest" description="Disordered" evidence="6">
    <location>
        <begin position="702"/>
        <end position="725"/>
    </location>
</feature>
<feature type="short sequence motif" description="Q motif">
    <location>
        <begin position="289"/>
        <end position="317"/>
    </location>
</feature>
<feature type="short sequence motif" description="DEAD box" evidence="1">
    <location>
        <begin position="447"/>
        <end position="450"/>
    </location>
</feature>
<feature type="compositionally biased region" description="Polar residues" evidence="6">
    <location>
        <begin position="28"/>
        <end position="43"/>
    </location>
</feature>
<feature type="compositionally biased region" description="Basic and acidic residues" evidence="6">
    <location>
        <begin position="70"/>
        <end position="79"/>
    </location>
</feature>
<feature type="compositionally biased region" description="Low complexity" evidence="6">
    <location>
        <begin position="143"/>
        <end position="156"/>
    </location>
</feature>
<feature type="compositionally biased region" description="Low complexity" evidence="6">
    <location>
        <begin position="196"/>
        <end position="206"/>
    </location>
</feature>
<feature type="compositionally biased region" description="Polar residues" evidence="6">
    <location>
        <begin position="703"/>
        <end position="716"/>
    </location>
</feature>
<feature type="binding site" evidence="4">
    <location>
        <begin position="333"/>
        <end position="340"/>
    </location>
    <ligand>
        <name>ATP</name>
        <dbReference type="ChEBI" id="CHEBI:30616"/>
    </ligand>
</feature>
<feature type="modified residue" description="Phosphoserine" evidence="2">
    <location>
        <position position="223"/>
    </location>
</feature>
<feature type="modified residue" description="Phosphoserine" evidence="1">
    <location>
        <position position="227"/>
    </location>
</feature>
<feature type="modified residue" description="Phosphoserine" evidence="1">
    <location>
        <position position="723"/>
    </location>
</feature>
<sequence>MGDEDWEAEINPHMSSYVPIFEKDRYSSGENGDNFNRTPTSSSEMDDGPSRRDHFMKSGFASGRNFGNRDAGESNKRDNTSTMGGFGVGKSFGNRGFSNSKFEDGDSSGFWRESSNDCEDNPTRNRGFSKRGGYRDGNNSEASGPSRRGGRSSFRGCRGGFGLGSPNNDLDPDECMQRTGGLFGSRRPALSGTGNGDTSQSRSGSGSERGGYKGLNEEVITGSGKNSWKSEAEGGESSDTQGPKVTYIPPPPPEDEDSIFAHYQTGISFDKYDTILVEVSGHDAPPAILTFEEANLCQTLNNNIAKAGYTKLTPVQKYSIPIILAGRDLMACAQTGSGKTAAFLLPILAHMMHDGITASCFKELQEPECIIVAPTRELVNQIYLEARKFSFGTCVRAVVIYGGTQLGHSIRQIVQGCNILCATPGRLMDIIGKEKIGLKQIKYLVLDEADRMLDMGFGPEMKKLISCPGMPSKEQRQTLMFSATFPEEIQRLAAEFLKSNYLFVAVGQVGGACRDVQQTVLQVGQFSKREKLVEILRNIGDERTMVFVETKKKADFIATFLCQEKISTTSIHGDREQREREQALGDFRCGKCPVLVATSVAARGLDIENVQHVINFDLPSTIDEYVHRIGRTGRCGNTGRAISFFDLESDNHLAQPLVKVLTDAQQDVPAWLEEIAFSTYIPGFSGSTRGNVFASVDTRKGKSSLNTAGFSSSQAPNPVDDESWD</sequence>
<evidence type="ECO:0000250" key="1">
    <source>
        <dbReference type="UniProtKB" id="Q61496"/>
    </source>
</evidence>
<evidence type="ECO:0000250" key="2">
    <source>
        <dbReference type="UniProtKB" id="Q64060"/>
    </source>
</evidence>
<evidence type="ECO:0000250" key="3">
    <source>
        <dbReference type="UniProtKB" id="Q9NQI0"/>
    </source>
</evidence>
<evidence type="ECO:0000255" key="4">
    <source>
        <dbReference type="PROSITE-ProRule" id="PRU00541"/>
    </source>
</evidence>
<evidence type="ECO:0000255" key="5">
    <source>
        <dbReference type="PROSITE-ProRule" id="PRU00542"/>
    </source>
</evidence>
<evidence type="ECO:0000256" key="6">
    <source>
        <dbReference type="SAM" id="MobiDB-lite"/>
    </source>
</evidence>
<evidence type="ECO:0000305" key="7"/>
<organism>
    <name type="scientific">Macaca fascicularis</name>
    <name type="common">Crab-eating macaque</name>
    <name type="synonym">Cynomolgus monkey</name>
    <dbReference type="NCBI Taxonomy" id="9541"/>
    <lineage>
        <taxon>Eukaryota</taxon>
        <taxon>Metazoa</taxon>
        <taxon>Chordata</taxon>
        <taxon>Craniata</taxon>
        <taxon>Vertebrata</taxon>
        <taxon>Euteleostomi</taxon>
        <taxon>Mammalia</taxon>
        <taxon>Eutheria</taxon>
        <taxon>Euarchontoglires</taxon>
        <taxon>Primates</taxon>
        <taxon>Haplorrhini</taxon>
        <taxon>Catarrhini</taxon>
        <taxon>Cercopithecidae</taxon>
        <taxon>Cercopithecinae</taxon>
        <taxon>Macaca</taxon>
    </lineage>
</organism>
<keyword id="KW-0067">ATP-binding</keyword>
<keyword id="KW-0963">Cytoplasm</keyword>
<keyword id="KW-0217">Developmental protein</keyword>
<keyword id="KW-0221">Differentiation</keyword>
<keyword id="KW-0347">Helicase</keyword>
<keyword id="KW-0378">Hydrolase</keyword>
<keyword id="KW-0469">Meiosis</keyword>
<keyword id="KW-0547">Nucleotide-binding</keyword>
<keyword id="KW-0597">Phosphoprotein</keyword>
<keyword id="KW-1185">Reference proteome</keyword>
<keyword id="KW-0677">Repeat</keyword>
<keyword id="KW-0943">RNA-mediated gene silencing</keyword>
<keyword id="KW-0744">Spermatogenesis</keyword>
<protein>
    <recommendedName>
        <fullName>Probable ATP-dependent RNA helicase DDX4</fullName>
        <ecNumber evidence="1">3.6.4.13</ecNumber>
    </recommendedName>
    <alternativeName>
        <fullName>DEAD box protein 4</fullName>
    </alternativeName>
    <alternativeName>
        <fullName>Vasa homolog</fullName>
    </alternativeName>
</protein>